<organism>
    <name type="scientific">Escherichia coli O6:H1 (strain CFT073 / ATCC 700928 / UPEC)</name>
    <dbReference type="NCBI Taxonomy" id="199310"/>
    <lineage>
        <taxon>Bacteria</taxon>
        <taxon>Pseudomonadati</taxon>
        <taxon>Pseudomonadota</taxon>
        <taxon>Gammaproteobacteria</taxon>
        <taxon>Enterobacterales</taxon>
        <taxon>Enterobacteriaceae</taxon>
        <taxon>Escherichia</taxon>
    </lineage>
</organism>
<feature type="chain" id="PRO_0000126030" description="Small heat shock protein IbpB">
    <location>
        <begin position="1"/>
        <end position="142"/>
    </location>
</feature>
<feature type="domain" description="sHSP" evidence="2">
    <location>
        <begin position="26"/>
        <end position="137"/>
    </location>
</feature>
<comment type="function">
    <text evidence="1">Associates with aggregated proteins, together with IbpA, to stabilize and protect them from irreversible denaturation and extensive proteolysis during heat shock and oxidative stress. Aggregated proteins bound to the IbpAB complex are more efficiently refolded and reactivated by the ATP-dependent chaperone systems ClpB and DnaK/DnaJ/GrpE. Its activity is ATP-independent.</text>
</comment>
<comment type="subunit">
    <text evidence="1">Homodimer. Forms homomultimers of about 100-150 subunits at optimal growth temperatures. Conformation changes to oligomers at high temperatures or high ionic concentrations. The decrease in size of the multimers is accompanied by an increase in chaperone activity.</text>
</comment>
<comment type="subcellular location">
    <subcellularLocation>
        <location evidence="1">Cytoplasm</location>
    </subcellularLocation>
</comment>
<comment type="domain">
    <text evidence="1">The N- and C-terminal flexible termini are involved in oligomerization and in the binding of non-native substrate proteins, and are essential for chaperone activity.</text>
</comment>
<comment type="similarity">
    <text evidence="1 2">Belongs to the small heat shock protein (HSP20) family.</text>
</comment>
<comment type="sequence caution" evidence="3">
    <conflict type="erroneous initiation">
        <sequence resource="EMBL-CDS" id="AAN83041"/>
    </conflict>
</comment>
<sequence length="142" mass="16093">MRNFDLSPLMRQWIGFDKLANALQNAGESQSFPPYNIEKSDDNHYRITLALAGFRQEDLEIQLEGTRLSVKGTPEQPKEEKKWLHQGLMNQPFSLSFTLAENMEVSGATFVNGLLHIDLIRNEPEPIAAQRIAISERPALNS</sequence>
<accession>P0C059</accession>
<accession>P29210</accession>
<accession>P76733</accession>
<proteinExistence type="inferred from homology"/>
<reference key="1">
    <citation type="journal article" date="2002" name="Proc. Natl. Acad. Sci. U.S.A.">
        <title>Extensive mosaic structure revealed by the complete genome sequence of uropathogenic Escherichia coli.</title>
        <authorList>
            <person name="Welch R.A."/>
            <person name="Burland V."/>
            <person name="Plunkett G. III"/>
            <person name="Redford P."/>
            <person name="Roesch P."/>
            <person name="Rasko D."/>
            <person name="Buckles E.L."/>
            <person name="Liou S.-R."/>
            <person name="Boutin A."/>
            <person name="Hackett J."/>
            <person name="Stroud D."/>
            <person name="Mayhew G.F."/>
            <person name="Rose D.J."/>
            <person name="Zhou S."/>
            <person name="Schwartz D.C."/>
            <person name="Perna N.T."/>
            <person name="Mobley H.L.T."/>
            <person name="Donnenberg M.S."/>
            <person name="Blattner F.R."/>
        </authorList>
    </citation>
    <scope>NUCLEOTIDE SEQUENCE [LARGE SCALE GENOMIC DNA]</scope>
    <source>
        <strain>CFT073 / ATCC 700928 / UPEC</strain>
    </source>
</reference>
<evidence type="ECO:0000255" key="1">
    <source>
        <dbReference type="HAMAP-Rule" id="MF_02001"/>
    </source>
</evidence>
<evidence type="ECO:0000255" key="2">
    <source>
        <dbReference type="PROSITE-ProRule" id="PRU00285"/>
    </source>
</evidence>
<evidence type="ECO:0000305" key="3"/>
<dbReference type="EMBL" id="AE014075">
    <property type="protein sequence ID" value="AAN83041.1"/>
    <property type="status" value="ALT_INIT"/>
    <property type="molecule type" value="Genomic_DNA"/>
</dbReference>
<dbReference type="RefSeq" id="WP_001243431.1">
    <property type="nucleotide sequence ID" value="NZ_CP051263.1"/>
</dbReference>
<dbReference type="SMR" id="P0C059"/>
<dbReference type="STRING" id="199310.c4606"/>
<dbReference type="GeneID" id="93778427"/>
<dbReference type="KEGG" id="ecc:c4606"/>
<dbReference type="eggNOG" id="COG0071">
    <property type="taxonomic scope" value="Bacteria"/>
</dbReference>
<dbReference type="HOGENOM" id="CLU_046737_4_2_6"/>
<dbReference type="Proteomes" id="UP000001410">
    <property type="component" value="Chromosome"/>
</dbReference>
<dbReference type="GO" id="GO:0005737">
    <property type="term" value="C:cytoplasm"/>
    <property type="evidence" value="ECO:0007669"/>
    <property type="project" value="UniProtKB-SubCell"/>
</dbReference>
<dbReference type="GO" id="GO:0050821">
    <property type="term" value="P:protein stabilization"/>
    <property type="evidence" value="ECO:0007669"/>
    <property type="project" value="UniProtKB-UniRule"/>
</dbReference>
<dbReference type="CDD" id="cd06470">
    <property type="entry name" value="ACD_IbpA-B_like"/>
    <property type="match status" value="1"/>
</dbReference>
<dbReference type="FunFam" id="2.60.40.790:FF:000005">
    <property type="entry name" value="Small heat shock protein IbpB"/>
    <property type="match status" value="1"/>
</dbReference>
<dbReference type="Gene3D" id="2.60.40.790">
    <property type="match status" value="1"/>
</dbReference>
<dbReference type="HAMAP" id="MF_02001">
    <property type="entry name" value="HSP20_IbpB"/>
    <property type="match status" value="1"/>
</dbReference>
<dbReference type="InterPro" id="IPR002068">
    <property type="entry name" value="A-crystallin/Hsp20_dom"/>
</dbReference>
<dbReference type="InterPro" id="IPR037913">
    <property type="entry name" value="ACD_IbpA/B"/>
</dbReference>
<dbReference type="InterPro" id="IPR008978">
    <property type="entry name" value="HSP20-like_chaperone"/>
</dbReference>
<dbReference type="InterPro" id="IPR022848">
    <property type="entry name" value="HSP20_IbpB"/>
</dbReference>
<dbReference type="NCBIfam" id="NF008618">
    <property type="entry name" value="PRK11597.1"/>
    <property type="match status" value="1"/>
</dbReference>
<dbReference type="PANTHER" id="PTHR47062">
    <property type="match status" value="1"/>
</dbReference>
<dbReference type="PANTHER" id="PTHR47062:SF2">
    <property type="entry name" value="SMALL HEAT SHOCK PROTEIN IBPB"/>
    <property type="match status" value="1"/>
</dbReference>
<dbReference type="Pfam" id="PF00011">
    <property type="entry name" value="HSP20"/>
    <property type="match status" value="1"/>
</dbReference>
<dbReference type="SUPFAM" id="SSF49764">
    <property type="entry name" value="HSP20-like chaperones"/>
    <property type="match status" value="1"/>
</dbReference>
<dbReference type="PROSITE" id="PS01031">
    <property type="entry name" value="SHSP"/>
    <property type="match status" value="1"/>
</dbReference>
<keyword id="KW-0143">Chaperone</keyword>
<keyword id="KW-0963">Cytoplasm</keyword>
<keyword id="KW-1185">Reference proteome</keyword>
<keyword id="KW-0346">Stress response</keyword>
<protein>
    <recommendedName>
        <fullName evidence="1">Small heat shock protein IbpB</fullName>
    </recommendedName>
    <alternativeName>
        <fullName evidence="1">16 kDa heat shock protein B</fullName>
    </alternativeName>
</protein>
<gene>
    <name evidence="1" type="primary">ibpB</name>
    <name type="ordered locus">c4606</name>
</gene>
<name>IBPB_ECOL6</name>